<proteinExistence type="inferred from homology"/>
<evidence type="ECO:0000255" key="1">
    <source>
        <dbReference type="HAMAP-Rule" id="MF_00385"/>
    </source>
</evidence>
<evidence type="ECO:0000305" key="2"/>
<dbReference type="EMBL" id="FM204884">
    <property type="protein sequence ID" value="CAW99053.1"/>
    <property type="molecule type" value="Genomic_DNA"/>
</dbReference>
<dbReference type="SMR" id="C0MEH6"/>
<dbReference type="KEGG" id="seq:SZO_08530"/>
<dbReference type="eggNOG" id="COG0228">
    <property type="taxonomic scope" value="Bacteria"/>
</dbReference>
<dbReference type="HOGENOM" id="CLU_100590_5_0_9"/>
<dbReference type="Proteomes" id="UP000001368">
    <property type="component" value="Chromosome"/>
</dbReference>
<dbReference type="GO" id="GO:0005737">
    <property type="term" value="C:cytoplasm"/>
    <property type="evidence" value="ECO:0007669"/>
    <property type="project" value="UniProtKB-ARBA"/>
</dbReference>
<dbReference type="GO" id="GO:0015935">
    <property type="term" value="C:small ribosomal subunit"/>
    <property type="evidence" value="ECO:0007669"/>
    <property type="project" value="TreeGrafter"/>
</dbReference>
<dbReference type="GO" id="GO:0003735">
    <property type="term" value="F:structural constituent of ribosome"/>
    <property type="evidence" value="ECO:0007669"/>
    <property type="project" value="InterPro"/>
</dbReference>
<dbReference type="GO" id="GO:0006412">
    <property type="term" value="P:translation"/>
    <property type="evidence" value="ECO:0007669"/>
    <property type="project" value="UniProtKB-UniRule"/>
</dbReference>
<dbReference type="FunFam" id="3.30.1320.10:FF:000002">
    <property type="entry name" value="30S ribosomal protein S16"/>
    <property type="match status" value="1"/>
</dbReference>
<dbReference type="Gene3D" id="3.30.1320.10">
    <property type="match status" value="1"/>
</dbReference>
<dbReference type="HAMAP" id="MF_00385">
    <property type="entry name" value="Ribosomal_bS16"/>
    <property type="match status" value="1"/>
</dbReference>
<dbReference type="InterPro" id="IPR000307">
    <property type="entry name" value="Ribosomal_bS16"/>
</dbReference>
<dbReference type="InterPro" id="IPR023803">
    <property type="entry name" value="Ribosomal_bS16_dom_sf"/>
</dbReference>
<dbReference type="NCBIfam" id="TIGR00002">
    <property type="entry name" value="S16"/>
    <property type="match status" value="1"/>
</dbReference>
<dbReference type="PANTHER" id="PTHR12919">
    <property type="entry name" value="30S RIBOSOMAL PROTEIN S16"/>
    <property type="match status" value="1"/>
</dbReference>
<dbReference type="PANTHER" id="PTHR12919:SF20">
    <property type="entry name" value="SMALL RIBOSOMAL SUBUNIT PROTEIN BS16M"/>
    <property type="match status" value="1"/>
</dbReference>
<dbReference type="Pfam" id="PF00886">
    <property type="entry name" value="Ribosomal_S16"/>
    <property type="match status" value="1"/>
</dbReference>
<dbReference type="SUPFAM" id="SSF54565">
    <property type="entry name" value="Ribosomal protein S16"/>
    <property type="match status" value="1"/>
</dbReference>
<reference key="1">
    <citation type="journal article" date="2009" name="PLoS Pathog.">
        <title>Genomic evidence for the evolution of Streptococcus equi: host restriction, increased virulence, and genetic exchange with human pathogens.</title>
        <authorList>
            <person name="Holden M.T.G."/>
            <person name="Heather Z."/>
            <person name="Paillot R."/>
            <person name="Steward K.F."/>
            <person name="Webb K."/>
            <person name="Ainslie F."/>
            <person name="Jourdan T."/>
            <person name="Bason N.C."/>
            <person name="Holroyd N.E."/>
            <person name="Mungall K."/>
            <person name="Quail M.A."/>
            <person name="Sanders M."/>
            <person name="Simmonds M."/>
            <person name="Willey D."/>
            <person name="Brooks K."/>
            <person name="Aanensen D.M."/>
            <person name="Spratt B.G."/>
            <person name="Jolley K.A."/>
            <person name="Maiden M.C.J."/>
            <person name="Kehoe M."/>
            <person name="Chanter N."/>
            <person name="Bentley S.D."/>
            <person name="Robinson C."/>
            <person name="Maskell D.J."/>
            <person name="Parkhill J."/>
            <person name="Waller A.S."/>
        </authorList>
    </citation>
    <scope>NUCLEOTIDE SEQUENCE [LARGE SCALE GENOMIC DNA]</scope>
    <source>
        <strain>H70</strain>
    </source>
</reference>
<comment type="similarity">
    <text evidence="1">Belongs to the bacterial ribosomal protein bS16 family.</text>
</comment>
<accession>C0MEH6</accession>
<keyword id="KW-0687">Ribonucleoprotein</keyword>
<keyword id="KW-0689">Ribosomal protein</keyword>
<protein>
    <recommendedName>
        <fullName evidence="1">Small ribosomal subunit protein bS16</fullName>
    </recommendedName>
    <alternativeName>
        <fullName evidence="2">30S ribosomal protein S16</fullName>
    </alternativeName>
</protein>
<name>RS16_STRS7</name>
<sequence length="90" mass="10167">MAVKIRLTRMGSKKKPFYRINVADSRAPRDGRFIETVGTYNPLVAENQVTLKEDRVLDWLGKGAQPSDTVRSLLSKAGVMAKFHDQKFSK</sequence>
<feature type="chain" id="PRO_1000205773" description="Small ribosomal subunit protein bS16">
    <location>
        <begin position="1"/>
        <end position="90"/>
    </location>
</feature>
<gene>
    <name evidence="1" type="primary">rpsP</name>
    <name type="ordered locus">SZO_08530</name>
</gene>
<organism>
    <name type="scientific">Streptococcus equi subsp. zooepidemicus (strain H70)</name>
    <dbReference type="NCBI Taxonomy" id="553483"/>
    <lineage>
        <taxon>Bacteria</taxon>
        <taxon>Bacillati</taxon>
        <taxon>Bacillota</taxon>
        <taxon>Bacilli</taxon>
        <taxon>Lactobacillales</taxon>
        <taxon>Streptococcaceae</taxon>
        <taxon>Streptococcus</taxon>
    </lineage>
</organism>